<sequence length="129" mass="14298">MNLIQTLEKEQFDKLSAGKTIPEFGPGDTVIVNVKVVEGERSRVQAYEGVCIGRSGGGINESFTVRKISYGEGVERVFPLLSPMIDSIKVVRRGKVRRAKLYYLRNLRGKSARIVEKKQDRTAAVAAAE</sequence>
<proteinExistence type="evidence at protein level"/>
<gene>
    <name evidence="1" type="primary">rplS</name>
    <name type="ordered locus">RPA0241</name>
</gene>
<protein>
    <recommendedName>
        <fullName evidence="1">Large ribosomal subunit protein bL19</fullName>
    </recommendedName>
    <alternativeName>
        <fullName evidence="3">50S ribosomal protein L19</fullName>
    </alternativeName>
    <alternativeName>
        <fullName>RRP-L19</fullName>
    </alternativeName>
</protein>
<feature type="chain" id="PRO_0000163517" description="Large ribosomal subunit protein bL19">
    <location>
        <begin position="1"/>
        <end position="129"/>
    </location>
</feature>
<accession>Q6ND68</accession>
<keyword id="KW-0687">Ribonucleoprotein</keyword>
<keyword id="KW-0689">Ribosomal protein</keyword>
<organism>
    <name type="scientific">Rhodopseudomonas palustris (strain ATCC BAA-98 / CGA009)</name>
    <dbReference type="NCBI Taxonomy" id="258594"/>
    <lineage>
        <taxon>Bacteria</taxon>
        <taxon>Pseudomonadati</taxon>
        <taxon>Pseudomonadota</taxon>
        <taxon>Alphaproteobacteria</taxon>
        <taxon>Hyphomicrobiales</taxon>
        <taxon>Nitrobacteraceae</taxon>
        <taxon>Rhodopseudomonas</taxon>
    </lineage>
</organism>
<name>RL19_RHOPA</name>
<evidence type="ECO:0000255" key="1">
    <source>
        <dbReference type="HAMAP-Rule" id="MF_00402"/>
    </source>
</evidence>
<evidence type="ECO:0000269" key="2">
    <source>
    </source>
</evidence>
<evidence type="ECO:0000305" key="3"/>
<dbReference type="EMBL" id="BX572593">
    <property type="protein sequence ID" value="CAE25685.1"/>
    <property type="molecule type" value="Genomic_DNA"/>
</dbReference>
<dbReference type="RefSeq" id="WP_011155809.1">
    <property type="nucleotide sequence ID" value="NZ_CP116810.1"/>
</dbReference>
<dbReference type="SMR" id="Q6ND68"/>
<dbReference type="IntAct" id="Q6ND68">
    <property type="interactions" value="1"/>
</dbReference>
<dbReference type="STRING" id="258594.RPA0241"/>
<dbReference type="GeneID" id="66891248"/>
<dbReference type="eggNOG" id="COG0335">
    <property type="taxonomic scope" value="Bacteria"/>
</dbReference>
<dbReference type="HOGENOM" id="CLU_103507_2_1_5"/>
<dbReference type="PhylomeDB" id="Q6ND68"/>
<dbReference type="GO" id="GO:0022625">
    <property type="term" value="C:cytosolic large ribosomal subunit"/>
    <property type="evidence" value="ECO:0007669"/>
    <property type="project" value="TreeGrafter"/>
</dbReference>
<dbReference type="GO" id="GO:0003735">
    <property type="term" value="F:structural constituent of ribosome"/>
    <property type="evidence" value="ECO:0007669"/>
    <property type="project" value="InterPro"/>
</dbReference>
<dbReference type="GO" id="GO:0006412">
    <property type="term" value="P:translation"/>
    <property type="evidence" value="ECO:0007669"/>
    <property type="project" value="UniProtKB-UniRule"/>
</dbReference>
<dbReference type="FunFam" id="2.30.30.790:FF:000001">
    <property type="entry name" value="50S ribosomal protein L19"/>
    <property type="match status" value="1"/>
</dbReference>
<dbReference type="Gene3D" id="2.30.30.790">
    <property type="match status" value="1"/>
</dbReference>
<dbReference type="HAMAP" id="MF_00402">
    <property type="entry name" value="Ribosomal_bL19"/>
    <property type="match status" value="1"/>
</dbReference>
<dbReference type="InterPro" id="IPR001857">
    <property type="entry name" value="Ribosomal_bL19"/>
</dbReference>
<dbReference type="InterPro" id="IPR018257">
    <property type="entry name" value="Ribosomal_bL19_CS"/>
</dbReference>
<dbReference type="InterPro" id="IPR038657">
    <property type="entry name" value="Ribosomal_bL19_sf"/>
</dbReference>
<dbReference type="InterPro" id="IPR008991">
    <property type="entry name" value="Translation_prot_SH3-like_sf"/>
</dbReference>
<dbReference type="NCBIfam" id="TIGR01024">
    <property type="entry name" value="rplS_bact"/>
    <property type="match status" value="1"/>
</dbReference>
<dbReference type="PANTHER" id="PTHR15680:SF9">
    <property type="entry name" value="LARGE RIBOSOMAL SUBUNIT PROTEIN BL19M"/>
    <property type="match status" value="1"/>
</dbReference>
<dbReference type="PANTHER" id="PTHR15680">
    <property type="entry name" value="RIBOSOMAL PROTEIN L19"/>
    <property type="match status" value="1"/>
</dbReference>
<dbReference type="Pfam" id="PF01245">
    <property type="entry name" value="Ribosomal_L19"/>
    <property type="match status" value="1"/>
</dbReference>
<dbReference type="PIRSF" id="PIRSF002191">
    <property type="entry name" value="Ribosomal_L19"/>
    <property type="match status" value="1"/>
</dbReference>
<dbReference type="PRINTS" id="PR00061">
    <property type="entry name" value="RIBOSOMALL19"/>
</dbReference>
<dbReference type="SUPFAM" id="SSF50104">
    <property type="entry name" value="Translation proteins SH3-like domain"/>
    <property type="match status" value="1"/>
</dbReference>
<dbReference type="PROSITE" id="PS01015">
    <property type="entry name" value="RIBOSOMAL_L19"/>
    <property type="match status" value="1"/>
</dbReference>
<comment type="function">
    <text evidence="1">This protein is located at the 30S-50S ribosomal subunit interface and may play a role in the structure and function of the aminoacyl-tRNA binding site.</text>
</comment>
<comment type="mass spectrometry" mass="14296.9" method="Electrospray" evidence="2"/>
<comment type="similarity">
    <text evidence="1">Belongs to the bacterial ribosomal protein bL19 family.</text>
</comment>
<reference key="1">
    <citation type="journal article" date="2004" name="Nat. Biotechnol.">
        <title>Complete genome sequence of the metabolically versatile photosynthetic bacterium Rhodopseudomonas palustris.</title>
        <authorList>
            <person name="Larimer F.W."/>
            <person name="Chain P."/>
            <person name="Hauser L."/>
            <person name="Lamerdin J.E."/>
            <person name="Malfatti S."/>
            <person name="Do L."/>
            <person name="Land M.L."/>
            <person name="Pelletier D.A."/>
            <person name="Beatty J.T."/>
            <person name="Lang A.S."/>
            <person name="Tabita F.R."/>
            <person name="Gibson J.L."/>
            <person name="Hanson T.E."/>
            <person name="Bobst C."/>
            <person name="Torres y Torres J.L."/>
            <person name="Peres C."/>
            <person name="Harrison F.H."/>
            <person name="Gibson J."/>
            <person name="Harwood C.S."/>
        </authorList>
    </citation>
    <scope>NUCLEOTIDE SEQUENCE [LARGE SCALE GENOMIC DNA]</scope>
    <source>
        <strain>ATCC BAA-98 / CGA009</strain>
    </source>
</reference>
<reference key="2">
    <citation type="journal article" date="2004" name="J. Proteome Res.">
        <title>Characterization of the 70S ribosome from Rhodopseudomonas palustris using an integrated 'top-down' and 'bottom-up' mass spectrometric approach.</title>
        <authorList>
            <person name="Strader M.B."/>
            <person name="VerBerkmoes N.C."/>
            <person name="Tabb D.L."/>
            <person name="Connelly H.M."/>
            <person name="Barton J.W."/>
            <person name="Bruce B.D."/>
            <person name="Pelletier D.A."/>
            <person name="Davison B.H."/>
            <person name="Hettich R.L."/>
            <person name="Larimer F.W."/>
            <person name="Hurst G.B."/>
        </authorList>
    </citation>
    <scope>MASS SPECTROMETRY</scope>
    <source>
        <strain>ATCC BAA-98 / CGA009</strain>
    </source>
</reference>